<sequence>MSVPLLEFHQVGFRYPNTPEPVLRDCSFTLEAGRKVALLGLNGSGKSTLFYLAAALYRRDRGEIYCQGQRLVHQPQRLRQWRQRIGLAFQDPEQQLVAATVAEDISYGLCNLGLSPPEVAARLHQTLQEFDLVALADRPLHHLSLGQKRRVALAGVMALAPTLLLLDEPTTYLDYQQRQQLRELLEKIHQQGTTIVIATHDLDFAYGWADWIMILVNGQVSVSDRASHVFGQWPTFAPELGTPTLLGLWQQLPPAWRQHRPFPRTVTEFSRELGERFRHLGDEC</sequence>
<accession>Q8DG84</accession>
<evidence type="ECO:0000250" key="1"/>
<evidence type="ECO:0000255" key="2">
    <source>
        <dbReference type="PROSITE-ProRule" id="PRU00434"/>
    </source>
</evidence>
<evidence type="ECO:0000305" key="3"/>
<feature type="chain" id="PRO_0000092113" description="Putative ABC transporter ATP-binding protein tll2439">
    <location>
        <begin position="1"/>
        <end position="284"/>
    </location>
</feature>
<feature type="domain" description="ABC transporter" evidence="2">
    <location>
        <begin position="6"/>
        <end position="242"/>
    </location>
</feature>
<feature type="binding site" evidence="2">
    <location>
        <begin position="40"/>
        <end position="47"/>
    </location>
    <ligand>
        <name>ATP</name>
        <dbReference type="ChEBI" id="CHEBI:30616"/>
    </ligand>
</feature>
<name>Y2439_THEVB</name>
<reference key="1">
    <citation type="journal article" date="2002" name="DNA Res.">
        <title>Complete genome structure of the thermophilic cyanobacterium Thermosynechococcus elongatus BP-1.</title>
        <authorList>
            <person name="Nakamura Y."/>
            <person name="Kaneko T."/>
            <person name="Sato S."/>
            <person name="Ikeuchi M."/>
            <person name="Katoh H."/>
            <person name="Sasamoto S."/>
            <person name="Watanabe A."/>
            <person name="Iriguchi M."/>
            <person name="Kawashima K."/>
            <person name="Kimura T."/>
            <person name="Kishida Y."/>
            <person name="Kiyokawa C."/>
            <person name="Kohara M."/>
            <person name="Matsumoto M."/>
            <person name="Matsuno A."/>
            <person name="Nakazaki N."/>
            <person name="Shimpo S."/>
            <person name="Sugimoto M."/>
            <person name="Takeuchi C."/>
            <person name="Yamada M."/>
            <person name="Tabata S."/>
        </authorList>
    </citation>
    <scope>NUCLEOTIDE SEQUENCE [LARGE SCALE GENOMIC DNA]</scope>
    <source>
        <strain>NIES-2133 / IAM M-273 / BP-1</strain>
    </source>
</reference>
<protein>
    <recommendedName>
        <fullName>Putative ABC transporter ATP-binding protein tll2439</fullName>
        <ecNumber>7.-.-.-</ecNumber>
    </recommendedName>
</protein>
<organism>
    <name type="scientific">Thermosynechococcus vestitus (strain NIES-2133 / IAM M-273 / BP-1)</name>
    <dbReference type="NCBI Taxonomy" id="197221"/>
    <lineage>
        <taxon>Bacteria</taxon>
        <taxon>Bacillati</taxon>
        <taxon>Cyanobacteriota</taxon>
        <taxon>Cyanophyceae</taxon>
        <taxon>Acaryochloridales</taxon>
        <taxon>Thermosynechococcaceae</taxon>
        <taxon>Thermosynechococcus</taxon>
    </lineage>
</organism>
<gene>
    <name type="ordered locus">tll2439</name>
</gene>
<keyword id="KW-0067">ATP-binding</keyword>
<keyword id="KW-0997">Cell inner membrane</keyword>
<keyword id="KW-1003">Cell membrane</keyword>
<keyword id="KW-0472">Membrane</keyword>
<keyword id="KW-0547">Nucleotide-binding</keyword>
<keyword id="KW-1185">Reference proteome</keyword>
<keyword id="KW-1278">Translocase</keyword>
<keyword id="KW-0813">Transport</keyword>
<proteinExistence type="inferred from homology"/>
<dbReference type="EC" id="7.-.-.-"/>
<dbReference type="EMBL" id="BA000039">
    <property type="protein sequence ID" value="BAC09991.1"/>
    <property type="molecule type" value="Genomic_DNA"/>
</dbReference>
<dbReference type="RefSeq" id="NP_683229.1">
    <property type="nucleotide sequence ID" value="NC_004113.1"/>
</dbReference>
<dbReference type="RefSeq" id="WP_011058271.1">
    <property type="nucleotide sequence ID" value="NC_004113.1"/>
</dbReference>
<dbReference type="SMR" id="Q8DG84"/>
<dbReference type="STRING" id="197221.gene:10749060"/>
<dbReference type="EnsemblBacteria" id="BAC09991">
    <property type="protein sequence ID" value="BAC09991"/>
    <property type="gene ID" value="BAC09991"/>
</dbReference>
<dbReference type="KEGG" id="tel:tll2439"/>
<dbReference type="PATRIC" id="fig|197221.4.peg.2563"/>
<dbReference type="eggNOG" id="COG1122">
    <property type="taxonomic scope" value="Bacteria"/>
</dbReference>
<dbReference type="Proteomes" id="UP000000440">
    <property type="component" value="Chromosome"/>
</dbReference>
<dbReference type="GO" id="GO:0043190">
    <property type="term" value="C:ATP-binding cassette (ABC) transporter complex"/>
    <property type="evidence" value="ECO:0007669"/>
    <property type="project" value="TreeGrafter"/>
</dbReference>
<dbReference type="GO" id="GO:0005524">
    <property type="term" value="F:ATP binding"/>
    <property type="evidence" value="ECO:0007669"/>
    <property type="project" value="UniProtKB-KW"/>
</dbReference>
<dbReference type="GO" id="GO:0016887">
    <property type="term" value="F:ATP hydrolysis activity"/>
    <property type="evidence" value="ECO:0007669"/>
    <property type="project" value="InterPro"/>
</dbReference>
<dbReference type="GO" id="GO:0042626">
    <property type="term" value="F:ATPase-coupled transmembrane transporter activity"/>
    <property type="evidence" value="ECO:0007669"/>
    <property type="project" value="TreeGrafter"/>
</dbReference>
<dbReference type="CDD" id="cd03225">
    <property type="entry name" value="ABC_cobalt_CbiO_domain1"/>
    <property type="match status" value="1"/>
</dbReference>
<dbReference type="FunFam" id="3.40.50.300:FF:000224">
    <property type="entry name" value="Energy-coupling factor transporter ATP-binding protein EcfA"/>
    <property type="match status" value="1"/>
</dbReference>
<dbReference type="Gene3D" id="3.40.50.300">
    <property type="entry name" value="P-loop containing nucleotide triphosphate hydrolases"/>
    <property type="match status" value="1"/>
</dbReference>
<dbReference type="InterPro" id="IPR003593">
    <property type="entry name" value="AAA+_ATPase"/>
</dbReference>
<dbReference type="InterPro" id="IPR003439">
    <property type="entry name" value="ABC_transporter-like_ATP-bd"/>
</dbReference>
<dbReference type="InterPro" id="IPR017871">
    <property type="entry name" value="ABC_transporter-like_CS"/>
</dbReference>
<dbReference type="InterPro" id="IPR015856">
    <property type="entry name" value="ABC_transpr_CbiO/EcfA_su"/>
</dbReference>
<dbReference type="InterPro" id="IPR050095">
    <property type="entry name" value="ECF_ABC_transporter_ATP-bd"/>
</dbReference>
<dbReference type="InterPro" id="IPR027417">
    <property type="entry name" value="P-loop_NTPase"/>
</dbReference>
<dbReference type="PANTHER" id="PTHR43553:SF24">
    <property type="entry name" value="ENERGY-COUPLING FACTOR TRANSPORTER ATP-BINDING PROTEIN ECFA1"/>
    <property type="match status" value="1"/>
</dbReference>
<dbReference type="PANTHER" id="PTHR43553">
    <property type="entry name" value="HEAVY METAL TRANSPORTER"/>
    <property type="match status" value="1"/>
</dbReference>
<dbReference type="Pfam" id="PF00005">
    <property type="entry name" value="ABC_tran"/>
    <property type="match status" value="1"/>
</dbReference>
<dbReference type="SMART" id="SM00382">
    <property type="entry name" value="AAA"/>
    <property type="match status" value="1"/>
</dbReference>
<dbReference type="SUPFAM" id="SSF52540">
    <property type="entry name" value="P-loop containing nucleoside triphosphate hydrolases"/>
    <property type="match status" value="1"/>
</dbReference>
<dbReference type="PROSITE" id="PS00211">
    <property type="entry name" value="ABC_TRANSPORTER_1"/>
    <property type="match status" value="1"/>
</dbReference>
<dbReference type="PROSITE" id="PS50893">
    <property type="entry name" value="ABC_TRANSPORTER_2"/>
    <property type="match status" value="1"/>
</dbReference>
<comment type="function">
    <text evidence="1">Probably part of an ABC transporter complex. Responsible for energy coupling to the transport system (By similarity).</text>
</comment>
<comment type="subcellular location">
    <subcellularLocation>
        <location evidence="1">Cell inner membrane</location>
        <topology evidence="1">Peripheral membrane protein</topology>
    </subcellularLocation>
</comment>
<comment type="similarity">
    <text evidence="3">Belongs to the ABC transporter superfamily.</text>
</comment>